<keyword id="KW-0496">Mitochondrion</keyword>
<keyword id="KW-1185">Reference proteome</keyword>
<keyword id="KW-0687">Ribonucleoprotein</keyword>
<keyword id="KW-0689">Ribosomal protein</keyword>
<sequence>MSLSPASGIGRFYAKSAKIIRFVRLGCTNRPFYHIVVMERRKNQHQPVIEQVGSFDPLPNDYNERLVALNTERIRYWLGKGAHLSTPAAELLGIAGLLPIHPRTYMTAWRNRRTAAEAEASPEKAESTA</sequence>
<gene>
    <name type="primary">mRpS16</name>
    <name type="ORF">CG8338</name>
</gene>
<protein>
    <recommendedName>
        <fullName evidence="2">Small ribosomal subunit protein bS16m</fullName>
    </recommendedName>
    <alternativeName>
        <fullName evidence="2">28S ribosomal protein S16, mitochondrial</fullName>
        <shortName>MRP-S16</shortName>
        <shortName>S16mt</shortName>
    </alternativeName>
</protein>
<proteinExistence type="evidence at transcript level"/>
<organism>
    <name type="scientific">Drosophila melanogaster</name>
    <name type="common">Fruit fly</name>
    <dbReference type="NCBI Taxonomy" id="7227"/>
    <lineage>
        <taxon>Eukaryota</taxon>
        <taxon>Metazoa</taxon>
        <taxon>Ecdysozoa</taxon>
        <taxon>Arthropoda</taxon>
        <taxon>Hexapoda</taxon>
        <taxon>Insecta</taxon>
        <taxon>Pterygota</taxon>
        <taxon>Neoptera</taxon>
        <taxon>Endopterygota</taxon>
        <taxon>Diptera</taxon>
        <taxon>Brachycera</taxon>
        <taxon>Muscomorpha</taxon>
        <taxon>Ephydroidea</taxon>
        <taxon>Drosophilidae</taxon>
        <taxon>Drosophila</taxon>
        <taxon>Sophophora</taxon>
    </lineage>
</organism>
<accession>Q9V6Y3</accession>
<dbReference type="EMBL" id="AE013599">
    <property type="protein sequence ID" value="AAF58284.1"/>
    <property type="molecule type" value="Genomic_DNA"/>
</dbReference>
<dbReference type="EMBL" id="AY119210">
    <property type="protein sequence ID" value="AAM51070.1"/>
    <property type="molecule type" value="mRNA"/>
</dbReference>
<dbReference type="RefSeq" id="NP_523737.1">
    <property type="nucleotide sequence ID" value="NM_079013.4"/>
</dbReference>
<dbReference type="SMR" id="Q9V6Y3"/>
<dbReference type="FunCoup" id="Q9V6Y3">
    <property type="interactions" value="1120"/>
</dbReference>
<dbReference type="IntAct" id="Q9V6Y3">
    <property type="interactions" value="34"/>
</dbReference>
<dbReference type="STRING" id="7227.FBpp0086704"/>
<dbReference type="PaxDb" id="7227-FBpp0302048"/>
<dbReference type="DNASU" id="36570"/>
<dbReference type="EnsemblMetazoa" id="FBtr0087578">
    <property type="protein sequence ID" value="FBpp0086704"/>
    <property type="gene ID" value="FBgn0033907"/>
</dbReference>
<dbReference type="GeneID" id="36570"/>
<dbReference type="KEGG" id="dme:Dmel_CG8338"/>
<dbReference type="AGR" id="FB:FBgn0033907"/>
<dbReference type="CTD" id="51021"/>
<dbReference type="FlyBase" id="FBgn0033907">
    <property type="gene designation" value="mRpS16"/>
</dbReference>
<dbReference type="VEuPathDB" id="VectorBase:FBgn0033907"/>
<dbReference type="eggNOG" id="KOG3419">
    <property type="taxonomic scope" value="Eukaryota"/>
</dbReference>
<dbReference type="GeneTree" id="ENSGT00390000014309"/>
<dbReference type="HOGENOM" id="CLU_100590_4_1_1"/>
<dbReference type="InParanoid" id="Q9V6Y3"/>
<dbReference type="OMA" id="PNDYNER"/>
<dbReference type="OrthoDB" id="407221at2759"/>
<dbReference type="PhylomeDB" id="Q9V6Y3"/>
<dbReference type="Reactome" id="R-DME-5389840">
    <property type="pathway name" value="Mitochondrial translation elongation"/>
</dbReference>
<dbReference type="Reactome" id="R-DME-5419276">
    <property type="pathway name" value="Mitochondrial translation termination"/>
</dbReference>
<dbReference type="SignaLink" id="Q9V6Y3"/>
<dbReference type="BioGRID-ORCS" id="36570">
    <property type="hits" value="0 hits in 1 CRISPR screen"/>
</dbReference>
<dbReference type="GenomeRNAi" id="36570"/>
<dbReference type="PRO" id="PR:Q9V6Y3"/>
<dbReference type="Proteomes" id="UP000000803">
    <property type="component" value="Chromosome 2R"/>
</dbReference>
<dbReference type="Bgee" id="FBgn0033907">
    <property type="expression patterns" value="Expressed in adult enteroendocrine precursor cell in adult midgut (Drosophila) and 131 other cell types or tissues"/>
</dbReference>
<dbReference type="GO" id="GO:0005763">
    <property type="term" value="C:mitochondrial small ribosomal subunit"/>
    <property type="evidence" value="ECO:0000250"/>
    <property type="project" value="UniProtKB"/>
</dbReference>
<dbReference type="GO" id="GO:0003735">
    <property type="term" value="F:structural constituent of ribosome"/>
    <property type="evidence" value="ECO:0000250"/>
    <property type="project" value="UniProtKB"/>
</dbReference>
<dbReference type="GO" id="GO:0032543">
    <property type="term" value="P:mitochondrial translation"/>
    <property type="evidence" value="ECO:0000250"/>
    <property type="project" value="UniProtKB"/>
</dbReference>
<dbReference type="FunFam" id="3.30.1320.10:FF:000004">
    <property type="entry name" value="28S ribosomal protein S16, mitochondrial"/>
    <property type="match status" value="1"/>
</dbReference>
<dbReference type="Gene3D" id="3.30.1320.10">
    <property type="match status" value="1"/>
</dbReference>
<dbReference type="HAMAP" id="MF_00385">
    <property type="entry name" value="Ribosomal_bS16"/>
    <property type="match status" value="1"/>
</dbReference>
<dbReference type="InterPro" id="IPR000307">
    <property type="entry name" value="Ribosomal_bS16"/>
</dbReference>
<dbReference type="InterPro" id="IPR023803">
    <property type="entry name" value="Ribosomal_bS16_dom_sf"/>
</dbReference>
<dbReference type="NCBIfam" id="TIGR00002">
    <property type="entry name" value="S16"/>
    <property type="match status" value="1"/>
</dbReference>
<dbReference type="PANTHER" id="PTHR12919">
    <property type="entry name" value="30S RIBOSOMAL PROTEIN S16"/>
    <property type="match status" value="1"/>
</dbReference>
<dbReference type="PANTHER" id="PTHR12919:SF20">
    <property type="entry name" value="SMALL RIBOSOMAL SUBUNIT PROTEIN BS16M"/>
    <property type="match status" value="1"/>
</dbReference>
<dbReference type="Pfam" id="PF00886">
    <property type="entry name" value="Ribosomal_S16"/>
    <property type="match status" value="1"/>
</dbReference>
<dbReference type="SUPFAM" id="SSF54565">
    <property type="entry name" value="Ribosomal protein S16"/>
    <property type="match status" value="1"/>
</dbReference>
<name>RT16_DROME</name>
<feature type="chain" id="PRO_0000167329" description="Small ribosomal subunit protein bS16m">
    <location>
        <begin position="1"/>
        <end position="129"/>
    </location>
</feature>
<comment type="subunit">
    <text evidence="1">Component of the mitochondrial ribosome small subunit (28S) which comprises a 12S rRNA and about 30 distinct proteins.</text>
</comment>
<comment type="subcellular location">
    <subcellularLocation>
        <location evidence="1">Mitochondrion</location>
    </subcellularLocation>
</comment>
<comment type="similarity">
    <text evidence="2">Belongs to the bacterial ribosomal protein bS16 family.</text>
</comment>
<evidence type="ECO:0000250" key="1">
    <source>
        <dbReference type="UniProtKB" id="Q9Y3D3"/>
    </source>
</evidence>
<evidence type="ECO:0000305" key="2"/>
<reference key="1">
    <citation type="journal article" date="2000" name="Science">
        <title>The genome sequence of Drosophila melanogaster.</title>
        <authorList>
            <person name="Adams M.D."/>
            <person name="Celniker S.E."/>
            <person name="Holt R.A."/>
            <person name="Evans C.A."/>
            <person name="Gocayne J.D."/>
            <person name="Amanatides P.G."/>
            <person name="Scherer S.E."/>
            <person name="Li P.W."/>
            <person name="Hoskins R.A."/>
            <person name="Galle R.F."/>
            <person name="George R.A."/>
            <person name="Lewis S.E."/>
            <person name="Richards S."/>
            <person name="Ashburner M."/>
            <person name="Henderson S.N."/>
            <person name="Sutton G.G."/>
            <person name="Wortman J.R."/>
            <person name="Yandell M.D."/>
            <person name="Zhang Q."/>
            <person name="Chen L.X."/>
            <person name="Brandon R.C."/>
            <person name="Rogers Y.-H.C."/>
            <person name="Blazej R.G."/>
            <person name="Champe M."/>
            <person name="Pfeiffer B.D."/>
            <person name="Wan K.H."/>
            <person name="Doyle C."/>
            <person name="Baxter E.G."/>
            <person name="Helt G."/>
            <person name="Nelson C.R."/>
            <person name="Miklos G.L.G."/>
            <person name="Abril J.F."/>
            <person name="Agbayani A."/>
            <person name="An H.-J."/>
            <person name="Andrews-Pfannkoch C."/>
            <person name="Baldwin D."/>
            <person name="Ballew R.M."/>
            <person name="Basu A."/>
            <person name="Baxendale J."/>
            <person name="Bayraktaroglu L."/>
            <person name="Beasley E.M."/>
            <person name="Beeson K.Y."/>
            <person name="Benos P.V."/>
            <person name="Berman B.P."/>
            <person name="Bhandari D."/>
            <person name="Bolshakov S."/>
            <person name="Borkova D."/>
            <person name="Botchan M.R."/>
            <person name="Bouck J."/>
            <person name="Brokstein P."/>
            <person name="Brottier P."/>
            <person name="Burtis K.C."/>
            <person name="Busam D.A."/>
            <person name="Butler H."/>
            <person name="Cadieu E."/>
            <person name="Center A."/>
            <person name="Chandra I."/>
            <person name="Cherry J.M."/>
            <person name="Cawley S."/>
            <person name="Dahlke C."/>
            <person name="Davenport L.B."/>
            <person name="Davies P."/>
            <person name="de Pablos B."/>
            <person name="Delcher A."/>
            <person name="Deng Z."/>
            <person name="Mays A.D."/>
            <person name="Dew I."/>
            <person name="Dietz S.M."/>
            <person name="Dodson K."/>
            <person name="Doup L.E."/>
            <person name="Downes M."/>
            <person name="Dugan-Rocha S."/>
            <person name="Dunkov B.C."/>
            <person name="Dunn P."/>
            <person name="Durbin K.J."/>
            <person name="Evangelista C.C."/>
            <person name="Ferraz C."/>
            <person name="Ferriera S."/>
            <person name="Fleischmann W."/>
            <person name="Fosler C."/>
            <person name="Gabrielian A.E."/>
            <person name="Garg N.S."/>
            <person name="Gelbart W.M."/>
            <person name="Glasser K."/>
            <person name="Glodek A."/>
            <person name="Gong F."/>
            <person name="Gorrell J.H."/>
            <person name="Gu Z."/>
            <person name="Guan P."/>
            <person name="Harris M."/>
            <person name="Harris N.L."/>
            <person name="Harvey D.A."/>
            <person name="Heiman T.J."/>
            <person name="Hernandez J.R."/>
            <person name="Houck J."/>
            <person name="Hostin D."/>
            <person name="Houston K.A."/>
            <person name="Howland T.J."/>
            <person name="Wei M.-H."/>
            <person name="Ibegwam C."/>
            <person name="Jalali M."/>
            <person name="Kalush F."/>
            <person name="Karpen G.H."/>
            <person name="Ke Z."/>
            <person name="Kennison J.A."/>
            <person name="Ketchum K.A."/>
            <person name="Kimmel B.E."/>
            <person name="Kodira C.D."/>
            <person name="Kraft C.L."/>
            <person name="Kravitz S."/>
            <person name="Kulp D."/>
            <person name="Lai Z."/>
            <person name="Lasko P."/>
            <person name="Lei Y."/>
            <person name="Levitsky A.A."/>
            <person name="Li J.H."/>
            <person name="Li Z."/>
            <person name="Liang Y."/>
            <person name="Lin X."/>
            <person name="Liu X."/>
            <person name="Mattei B."/>
            <person name="McIntosh T.C."/>
            <person name="McLeod M.P."/>
            <person name="McPherson D."/>
            <person name="Merkulov G."/>
            <person name="Milshina N.V."/>
            <person name="Mobarry C."/>
            <person name="Morris J."/>
            <person name="Moshrefi A."/>
            <person name="Mount S.M."/>
            <person name="Moy M."/>
            <person name="Murphy B."/>
            <person name="Murphy L."/>
            <person name="Muzny D.M."/>
            <person name="Nelson D.L."/>
            <person name="Nelson D.R."/>
            <person name="Nelson K.A."/>
            <person name="Nixon K."/>
            <person name="Nusskern D.R."/>
            <person name="Pacleb J.M."/>
            <person name="Palazzolo M."/>
            <person name="Pittman G.S."/>
            <person name="Pan S."/>
            <person name="Pollard J."/>
            <person name="Puri V."/>
            <person name="Reese M.G."/>
            <person name="Reinert K."/>
            <person name="Remington K."/>
            <person name="Saunders R.D.C."/>
            <person name="Scheeler F."/>
            <person name="Shen H."/>
            <person name="Shue B.C."/>
            <person name="Siden-Kiamos I."/>
            <person name="Simpson M."/>
            <person name="Skupski M.P."/>
            <person name="Smith T.J."/>
            <person name="Spier E."/>
            <person name="Spradling A.C."/>
            <person name="Stapleton M."/>
            <person name="Strong R."/>
            <person name="Sun E."/>
            <person name="Svirskas R."/>
            <person name="Tector C."/>
            <person name="Turner R."/>
            <person name="Venter E."/>
            <person name="Wang A.H."/>
            <person name="Wang X."/>
            <person name="Wang Z.-Y."/>
            <person name="Wassarman D.A."/>
            <person name="Weinstock G.M."/>
            <person name="Weissenbach J."/>
            <person name="Williams S.M."/>
            <person name="Woodage T."/>
            <person name="Worley K.C."/>
            <person name="Wu D."/>
            <person name="Yang S."/>
            <person name="Yao Q.A."/>
            <person name="Ye J."/>
            <person name="Yeh R.-F."/>
            <person name="Zaveri J.S."/>
            <person name="Zhan M."/>
            <person name="Zhang G."/>
            <person name="Zhao Q."/>
            <person name="Zheng L."/>
            <person name="Zheng X.H."/>
            <person name="Zhong F.N."/>
            <person name="Zhong W."/>
            <person name="Zhou X."/>
            <person name="Zhu S.C."/>
            <person name="Zhu X."/>
            <person name="Smith H.O."/>
            <person name="Gibbs R.A."/>
            <person name="Myers E.W."/>
            <person name="Rubin G.M."/>
            <person name="Venter J.C."/>
        </authorList>
    </citation>
    <scope>NUCLEOTIDE SEQUENCE [LARGE SCALE GENOMIC DNA]</scope>
    <source>
        <strain>Berkeley</strain>
    </source>
</reference>
<reference key="2">
    <citation type="journal article" date="2002" name="Genome Biol.">
        <title>Annotation of the Drosophila melanogaster euchromatic genome: a systematic review.</title>
        <authorList>
            <person name="Misra S."/>
            <person name="Crosby M.A."/>
            <person name="Mungall C.J."/>
            <person name="Matthews B.B."/>
            <person name="Campbell K.S."/>
            <person name="Hradecky P."/>
            <person name="Huang Y."/>
            <person name="Kaminker J.S."/>
            <person name="Millburn G.H."/>
            <person name="Prochnik S.E."/>
            <person name="Smith C.D."/>
            <person name="Tupy J.L."/>
            <person name="Whitfield E.J."/>
            <person name="Bayraktaroglu L."/>
            <person name="Berman B.P."/>
            <person name="Bettencourt B.R."/>
            <person name="Celniker S.E."/>
            <person name="de Grey A.D.N.J."/>
            <person name="Drysdale R.A."/>
            <person name="Harris N.L."/>
            <person name="Richter J."/>
            <person name="Russo S."/>
            <person name="Schroeder A.J."/>
            <person name="Shu S.Q."/>
            <person name="Stapleton M."/>
            <person name="Yamada C."/>
            <person name="Ashburner M."/>
            <person name="Gelbart W.M."/>
            <person name="Rubin G.M."/>
            <person name="Lewis S.E."/>
        </authorList>
    </citation>
    <scope>GENOME REANNOTATION</scope>
    <source>
        <strain>Berkeley</strain>
    </source>
</reference>
<reference key="3">
    <citation type="journal article" date="2002" name="Genome Biol.">
        <title>A Drosophila full-length cDNA resource.</title>
        <authorList>
            <person name="Stapleton M."/>
            <person name="Carlson J.W."/>
            <person name="Brokstein P."/>
            <person name="Yu C."/>
            <person name="Champe M."/>
            <person name="George R.A."/>
            <person name="Guarin H."/>
            <person name="Kronmiller B."/>
            <person name="Pacleb J.M."/>
            <person name="Park S."/>
            <person name="Wan K.H."/>
            <person name="Rubin G.M."/>
            <person name="Celniker S.E."/>
        </authorList>
    </citation>
    <scope>NUCLEOTIDE SEQUENCE [LARGE SCALE MRNA]</scope>
    <source>
        <strain>Berkeley</strain>
        <tissue>Embryo</tissue>
    </source>
</reference>